<protein>
    <recommendedName>
        <fullName evidence="1">tRNA 5-methylaminomethyl-2-thiouridine biosynthesis bifunctional protein MnmC</fullName>
        <shortName evidence="1">tRNA mnm(5)s(2)U biosynthesis bifunctional protein</shortName>
    </recommendedName>
    <domain>
        <recommendedName>
            <fullName evidence="1">tRNA (mnm(5)s(2)U34)-methyltransferase</fullName>
            <ecNumber evidence="1">2.1.1.61</ecNumber>
        </recommendedName>
    </domain>
    <domain>
        <recommendedName>
            <fullName evidence="1">FAD-dependent cmnm(5)s(2)U34 oxidoreductase</fullName>
            <ecNumber evidence="1">1.5.-.-</ecNumber>
        </recommendedName>
    </domain>
</protein>
<dbReference type="EC" id="2.1.1.61" evidence="1"/>
<dbReference type="EC" id="1.5.-.-" evidence="1"/>
<dbReference type="EMBL" id="CP000884">
    <property type="protein sequence ID" value="ABX37273.1"/>
    <property type="molecule type" value="Genomic_DNA"/>
</dbReference>
<dbReference type="SMR" id="A9C3G2"/>
<dbReference type="STRING" id="398578.Daci_4644"/>
<dbReference type="KEGG" id="dac:Daci_4644"/>
<dbReference type="eggNOG" id="COG0665">
    <property type="taxonomic scope" value="Bacteria"/>
</dbReference>
<dbReference type="eggNOG" id="COG4121">
    <property type="taxonomic scope" value="Bacteria"/>
</dbReference>
<dbReference type="HOGENOM" id="CLU_022427_1_0_4"/>
<dbReference type="Proteomes" id="UP000000784">
    <property type="component" value="Chromosome"/>
</dbReference>
<dbReference type="GO" id="GO:0005737">
    <property type="term" value="C:cytoplasm"/>
    <property type="evidence" value="ECO:0007669"/>
    <property type="project" value="UniProtKB-SubCell"/>
</dbReference>
<dbReference type="GO" id="GO:0050660">
    <property type="term" value="F:flavin adenine dinucleotide binding"/>
    <property type="evidence" value="ECO:0007669"/>
    <property type="project" value="UniProtKB-UniRule"/>
</dbReference>
<dbReference type="GO" id="GO:0016645">
    <property type="term" value="F:oxidoreductase activity, acting on the CH-NH group of donors"/>
    <property type="evidence" value="ECO:0007669"/>
    <property type="project" value="InterPro"/>
</dbReference>
<dbReference type="GO" id="GO:0004808">
    <property type="term" value="F:tRNA (5-methylaminomethyl-2-thiouridylate)(34)-methyltransferase activity"/>
    <property type="evidence" value="ECO:0007669"/>
    <property type="project" value="UniProtKB-EC"/>
</dbReference>
<dbReference type="GO" id="GO:0032259">
    <property type="term" value="P:methylation"/>
    <property type="evidence" value="ECO:0007669"/>
    <property type="project" value="UniProtKB-KW"/>
</dbReference>
<dbReference type="GO" id="GO:0002097">
    <property type="term" value="P:tRNA wobble base modification"/>
    <property type="evidence" value="ECO:0007669"/>
    <property type="project" value="UniProtKB-UniRule"/>
</dbReference>
<dbReference type="Gene3D" id="3.30.9.10">
    <property type="entry name" value="D-Amino Acid Oxidase, subunit A, domain 2"/>
    <property type="match status" value="1"/>
</dbReference>
<dbReference type="Gene3D" id="3.50.50.60">
    <property type="entry name" value="FAD/NAD(P)-binding domain"/>
    <property type="match status" value="1"/>
</dbReference>
<dbReference type="Gene3D" id="3.40.50.150">
    <property type="entry name" value="Vaccinia Virus protein VP39"/>
    <property type="match status" value="1"/>
</dbReference>
<dbReference type="HAMAP" id="MF_01102">
    <property type="entry name" value="MnmC"/>
    <property type="match status" value="1"/>
</dbReference>
<dbReference type="InterPro" id="IPR006076">
    <property type="entry name" value="FAD-dep_OxRdtase"/>
</dbReference>
<dbReference type="InterPro" id="IPR036188">
    <property type="entry name" value="FAD/NAD-bd_sf"/>
</dbReference>
<dbReference type="InterPro" id="IPR008471">
    <property type="entry name" value="MnmC-like_methylTransf"/>
</dbReference>
<dbReference type="InterPro" id="IPR029063">
    <property type="entry name" value="SAM-dependent_MTases_sf"/>
</dbReference>
<dbReference type="InterPro" id="IPR023032">
    <property type="entry name" value="tRNA_MAMT_biosynth_bifunc_MnmC"/>
</dbReference>
<dbReference type="InterPro" id="IPR047785">
    <property type="entry name" value="tRNA_MNMC2"/>
</dbReference>
<dbReference type="InterPro" id="IPR017610">
    <property type="entry name" value="tRNA_S-uridine_synth_MnmC_C"/>
</dbReference>
<dbReference type="NCBIfam" id="TIGR03197">
    <property type="entry name" value="MnmC_Cterm"/>
    <property type="match status" value="1"/>
</dbReference>
<dbReference type="NCBIfam" id="NF033855">
    <property type="entry name" value="tRNA_MNMC2"/>
    <property type="match status" value="1"/>
</dbReference>
<dbReference type="PANTHER" id="PTHR13847">
    <property type="entry name" value="SARCOSINE DEHYDROGENASE-RELATED"/>
    <property type="match status" value="1"/>
</dbReference>
<dbReference type="PANTHER" id="PTHR13847:SF283">
    <property type="entry name" value="TRNA 5-METHYLAMINOMETHYL-2-THIOURIDINE BIOSYNTHESIS BIFUNCTIONAL PROTEIN MNMC"/>
    <property type="match status" value="1"/>
</dbReference>
<dbReference type="Pfam" id="PF01266">
    <property type="entry name" value="DAO"/>
    <property type="match status" value="1"/>
</dbReference>
<dbReference type="Pfam" id="PF05430">
    <property type="entry name" value="Methyltransf_30"/>
    <property type="match status" value="1"/>
</dbReference>
<dbReference type="SUPFAM" id="SSF51905">
    <property type="entry name" value="FAD/NAD(P)-binding domain"/>
    <property type="match status" value="1"/>
</dbReference>
<organism>
    <name type="scientific">Delftia acidovorans (strain DSM 14801 / SPH-1)</name>
    <dbReference type="NCBI Taxonomy" id="398578"/>
    <lineage>
        <taxon>Bacteria</taxon>
        <taxon>Pseudomonadati</taxon>
        <taxon>Pseudomonadota</taxon>
        <taxon>Betaproteobacteria</taxon>
        <taxon>Burkholderiales</taxon>
        <taxon>Comamonadaceae</taxon>
        <taxon>Delftia</taxon>
    </lineage>
</organism>
<gene>
    <name evidence="1" type="primary">mnmC</name>
    <name type="ordered locus">Daci_4644</name>
</gene>
<comment type="function">
    <text evidence="1">Catalyzes the last two steps in the biosynthesis of 5-methylaminomethyl-2-thiouridine (mnm(5)s(2)U) at the wobble position (U34) in tRNA. Catalyzes the FAD-dependent demodification of cmnm(5)s(2)U34 to nm(5)s(2)U34, followed by the transfer of a methyl group from S-adenosyl-L-methionine to nm(5)s(2)U34, to form mnm(5)s(2)U34.</text>
</comment>
<comment type="catalytic activity">
    <reaction evidence="1">
        <text>5-aminomethyl-2-thiouridine(34) in tRNA + S-adenosyl-L-methionine = 5-methylaminomethyl-2-thiouridine(34) in tRNA + S-adenosyl-L-homocysteine + H(+)</text>
        <dbReference type="Rhea" id="RHEA:19569"/>
        <dbReference type="Rhea" id="RHEA-COMP:10195"/>
        <dbReference type="Rhea" id="RHEA-COMP:10197"/>
        <dbReference type="ChEBI" id="CHEBI:15378"/>
        <dbReference type="ChEBI" id="CHEBI:57856"/>
        <dbReference type="ChEBI" id="CHEBI:59789"/>
        <dbReference type="ChEBI" id="CHEBI:74454"/>
        <dbReference type="ChEBI" id="CHEBI:74455"/>
        <dbReference type="EC" id="2.1.1.61"/>
    </reaction>
</comment>
<comment type="cofactor">
    <cofactor evidence="1">
        <name>FAD</name>
        <dbReference type="ChEBI" id="CHEBI:57692"/>
    </cofactor>
</comment>
<comment type="subcellular location">
    <subcellularLocation>
        <location evidence="1">Cytoplasm</location>
    </subcellularLocation>
</comment>
<comment type="similarity">
    <text evidence="1">In the N-terminal section; belongs to the methyltransferase superfamily. tRNA (mnm(5)s(2)U34)-methyltransferase family.</text>
</comment>
<comment type="similarity">
    <text evidence="1">In the C-terminal section; belongs to the DAO family.</text>
</comment>
<feature type="chain" id="PRO_0000347979" description="tRNA 5-methylaminomethyl-2-thiouridine biosynthesis bifunctional protein MnmC">
    <location>
        <begin position="1"/>
        <end position="645"/>
    </location>
</feature>
<feature type="region of interest" description="tRNA (mnm(5)s(2)U34)-methyltransferase">
    <location>
        <begin position="1"/>
        <end position="230"/>
    </location>
</feature>
<feature type="region of interest" description="FAD-dependent cmnm(5)s(2)U34 oxidoreductase">
    <location>
        <begin position="254"/>
        <end position="645"/>
    </location>
</feature>
<accession>A9C3G2</accession>
<name>MNMC_DELAS</name>
<evidence type="ECO:0000255" key="1">
    <source>
        <dbReference type="HAMAP-Rule" id="MF_01102"/>
    </source>
</evidence>
<proteinExistence type="inferred from homology"/>
<sequence>MPMSEPIDWLPDGTPYSPRFGDRYHSELGGLDQARHVFLGGCGLPAAWADAPQWRILETGFGFGLNFLVAWEAWKADPRRPRLLHFVSAEAFPVSADAMRQAMPREPGLRLLAEELATRFQGLLPGVHRLAFEQGRVLLTLYIGDAQAMLRRQQITADSIYLDGFTPELNPDLWSADTLRALARHCRRGTQLSTWCVARTVRDGLAQHGFQVRKVDGVPPKRHNLHAVFDPAWQPRGPRAQPQEAITPRRCMVLGAGIAGAAAAASLSRRGWQVTVLDTADAPAAGASALPAGLFCPHVSPDDSLLSRLSRDGARLTLAQLQMLSGQGLLQPGTDWCDTGVLEHGVEAAPRLPRDWQSPGPGDHWSRPASADQLSAAGLPADAPACWHVQAGWVRPARLVQAQLALPGVRWQGRACVARLARTDTAGGAPVWQALDAQGNLLAEAELVVLALGPATNALLEHSLGAQAAWPLQPIRGQVSWDVHTPASAQAMPPFPVNGHGNLVPAMPLPGDAAGPGWVMGSTFERDQTALPPSPEDQAAAHAANGAKLAQLLPRAYQGLQGFFDAPPRATWGAVRVASPDRLPVVGPVSDQAPGLWALTAMGSRGLTLSLLCGELLAARLHDEPLPLDARLAAALASERLGRRR</sequence>
<keyword id="KW-0963">Cytoplasm</keyword>
<keyword id="KW-0274">FAD</keyword>
<keyword id="KW-0285">Flavoprotein</keyword>
<keyword id="KW-0489">Methyltransferase</keyword>
<keyword id="KW-0511">Multifunctional enzyme</keyword>
<keyword id="KW-0560">Oxidoreductase</keyword>
<keyword id="KW-1185">Reference proteome</keyword>
<keyword id="KW-0949">S-adenosyl-L-methionine</keyword>
<keyword id="KW-0808">Transferase</keyword>
<keyword id="KW-0819">tRNA processing</keyword>
<reference key="1">
    <citation type="submission" date="2007-11" db="EMBL/GenBank/DDBJ databases">
        <title>Complete sequence of Delftia acidovorans DSM 14801 / SPH-1.</title>
        <authorList>
            <person name="Copeland A."/>
            <person name="Lucas S."/>
            <person name="Lapidus A."/>
            <person name="Barry K."/>
            <person name="Glavina del Rio T."/>
            <person name="Dalin E."/>
            <person name="Tice H."/>
            <person name="Pitluck S."/>
            <person name="Lowry S."/>
            <person name="Clum A."/>
            <person name="Schmutz J."/>
            <person name="Larimer F."/>
            <person name="Land M."/>
            <person name="Hauser L."/>
            <person name="Kyrpides N."/>
            <person name="Kim E."/>
            <person name="Schleheck D."/>
            <person name="Richardson P."/>
        </authorList>
    </citation>
    <scope>NUCLEOTIDE SEQUENCE [LARGE SCALE GENOMIC DNA]</scope>
    <source>
        <strain>DSM 14801 / SPH-1</strain>
    </source>
</reference>